<gene>
    <name evidence="1" type="primary">prsA</name>
    <name type="ordered locus">LCA_0626</name>
</gene>
<sequence>MMKKWLLAAASLLMVVTLAGCGSNTIATLKGGKVTQDEFYKEIKETSAGKQQVQQMILQKALQEQYGSKSLTKKIDKTYNTYKKQYGSSFTSVLAQSGLTTSSFKNQITTQMLANAALKANKKVTNADLKKQWKTYEPKVEVQHILVEKKDTAETVISELKKDNSTKNFTALAKKYSTDTGTKKDGGKLPVFDSTDTSLDPTFKTAAFKLKTNEYTTTPVKTSYGYHVIRMIKNPGKGKMADHKKTLTDQVYAKWANDQTVMAKVYTKVLKKADVTIKDKDLSDILSSYGVNAKKSSAKSSSK</sequence>
<keyword id="KW-1003">Cell membrane</keyword>
<keyword id="KW-0413">Isomerase</keyword>
<keyword id="KW-0449">Lipoprotein</keyword>
<keyword id="KW-0472">Membrane</keyword>
<keyword id="KW-0564">Palmitate</keyword>
<keyword id="KW-1185">Reference proteome</keyword>
<keyword id="KW-0697">Rotamase</keyword>
<keyword id="KW-0732">Signal</keyword>
<reference key="1">
    <citation type="journal article" date="2005" name="Nat. Biotechnol.">
        <title>The complete genome sequence of the meat-borne lactic acid bacterium Lactobacillus sakei 23K.</title>
        <authorList>
            <person name="Chaillou S."/>
            <person name="Champomier-Verges M.-C."/>
            <person name="Cornet M."/>
            <person name="Crutz-Le Coq A.-M."/>
            <person name="Dudez A.-M."/>
            <person name="Martin V."/>
            <person name="Beaufils S."/>
            <person name="Darbon-Rongere E."/>
            <person name="Bossy R."/>
            <person name="Loux V."/>
            <person name="Zagorec M."/>
        </authorList>
    </citation>
    <scope>NUCLEOTIDE SEQUENCE [LARGE SCALE GENOMIC DNA]</scope>
    <source>
        <strain>23K</strain>
    </source>
</reference>
<protein>
    <recommendedName>
        <fullName evidence="1">Foldase protein PrsA</fullName>
        <ecNumber evidence="1">5.2.1.8</ecNumber>
    </recommendedName>
</protein>
<evidence type="ECO:0000255" key="1">
    <source>
        <dbReference type="HAMAP-Rule" id="MF_01145"/>
    </source>
</evidence>
<organism>
    <name type="scientific">Latilactobacillus sakei subsp. sakei (strain 23K)</name>
    <name type="common">Lactobacillus sakei subsp. sakei</name>
    <dbReference type="NCBI Taxonomy" id="314315"/>
    <lineage>
        <taxon>Bacteria</taxon>
        <taxon>Bacillati</taxon>
        <taxon>Bacillota</taxon>
        <taxon>Bacilli</taxon>
        <taxon>Lactobacillales</taxon>
        <taxon>Lactobacillaceae</taxon>
        <taxon>Latilactobacillus</taxon>
    </lineage>
</organism>
<proteinExistence type="inferred from homology"/>
<accession>Q38XZ9</accession>
<dbReference type="EC" id="5.2.1.8" evidence="1"/>
<dbReference type="EMBL" id="CR936503">
    <property type="protein sequence ID" value="CAI54930.1"/>
    <property type="molecule type" value="Genomic_DNA"/>
</dbReference>
<dbReference type="SMR" id="Q38XZ9"/>
<dbReference type="STRING" id="314315.LCA_0626"/>
<dbReference type="KEGG" id="lsa:LCA_0626"/>
<dbReference type="eggNOG" id="COG0760">
    <property type="taxonomic scope" value="Bacteria"/>
</dbReference>
<dbReference type="HOGENOM" id="CLU_034646_6_1_9"/>
<dbReference type="OrthoDB" id="14196at2"/>
<dbReference type="Proteomes" id="UP000002707">
    <property type="component" value="Chromosome"/>
</dbReference>
<dbReference type="GO" id="GO:0005886">
    <property type="term" value="C:plasma membrane"/>
    <property type="evidence" value="ECO:0007669"/>
    <property type="project" value="UniProtKB-SubCell"/>
</dbReference>
<dbReference type="GO" id="GO:0003755">
    <property type="term" value="F:peptidyl-prolyl cis-trans isomerase activity"/>
    <property type="evidence" value="ECO:0007669"/>
    <property type="project" value="UniProtKB-UniRule"/>
</dbReference>
<dbReference type="GO" id="GO:0006457">
    <property type="term" value="P:protein folding"/>
    <property type="evidence" value="ECO:0007669"/>
    <property type="project" value="UniProtKB-UniRule"/>
</dbReference>
<dbReference type="Gene3D" id="3.10.50.40">
    <property type="match status" value="1"/>
</dbReference>
<dbReference type="HAMAP" id="MF_01145">
    <property type="entry name" value="Foldase_PrsA"/>
    <property type="match status" value="1"/>
</dbReference>
<dbReference type="InterPro" id="IPR023059">
    <property type="entry name" value="Foldase_PrsA"/>
</dbReference>
<dbReference type="InterPro" id="IPR046357">
    <property type="entry name" value="PPIase_dom_sf"/>
</dbReference>
<dbReference type="InterPro" id="IPR000297">
    <property type="entry name" value="PPIase_PpiC"/>
</dbReference>
<dbReference type="InterPro" id="IPR050245">
    <property type="entry name" value="PrsA_foldase"/>
</dbReference>
<dbReference type="InterPro" id="IPR027304">
    <property type="entry name" value="Trigger_fact/SurA_dom_sf"/>
</dbReference>
<dbReference type="NCBIfam" id="NF003356">
    <property type="entry name" value="PRK04405.1"/>
    <property type="match status" value="1"/>
</dbReference>
<dbReference type="PANTHER" id="PTHR47245:SF1">
    <property type="entry name" value="FOLDASE PROTEIN PRSA"/>
    <property type="match status" value="1"/>
</dbReference>
<dbReference type="PANTHER" id="PTHR47245">
    <property type="entry name" value="PEPTIDYLPROLYL ISOMERASE"/>
    <property type="match status" value="1"/>
</dbReference>
<dbReference type="Pfam" id="PF13616">
    <property type="entry name" value="Rotamase_3"/>
    <property type="match status" value="1"/>
</dbReference>
<dbReference type="SUPFAM" id="SSF54534">
    <property type="entry name" value="FKBP-like"/>
    <property type="match status" value="1"/>
</dbReference>
<dbReference type="SUPFAM" id="SSF109998">
    <property type="entry name" value="Triger factor/SurA peptide-binding domain-like"/>
    <property type="match status" value="1"/>
</dbReference>
<dbReference type="PROSITE" id="PS50198">
    <property type="entry name" value="PPIC_PPIASE_2"/>
    <property type="match status" value="1"/>
</dbReference>
<dbReference type="PROSITE" id="PS51257">
    <property type="entry name" value="PROKAR_LIPOPROTEIN"/>
    <property type="match status" value="1"/>
</dbReference>
<comment type="function">
    <text evidence="1">Plays a major role in protein secretion by helping the post-translocational extracellular folding of several secreted proteins.</text>
</comment>
<comment type="catalytic activity">
    <reaction evidence="1">
        <text>[protein]-peptidylproline (omega=180) = [protein]-peptidylproline (omega=0)</text>
        <dbReference type="Rhea" id="RHEA:16237"/>
        <dbReference type="Rhea" id="RHEA-COMP:10747"/>
        <dbReference type="Rhea" id="RHEA-COMP:10748"/>
        <dbReference type="ChEBI" id="CHEBI:83833"/>
        <dbReference type="ChEBI" id="CHEBI:83834"/>
        <dbReference type="EC" id="5.2.1.8"/>
    </reaction>
</comment>
<comment type="subcellular location">
    <subcellularLocation>
        <location evidence="1">Cell membrane</location>
        <topology evidence="1">Lipid-anchor</topology>
    </subcellularLocation>
</comment>
<comment type="similarity">
    <text evidence="1">Belongs to the PrsA family.</text>
</comment>
<name>PRSA_LATSS</name>
<feature type="signal peptide" evidence="1">
    <location>
        <begin position="1"/>
        <end position="20"/>
    </location>
</feature>
<feature type="chain" id="PRO_1000164114" description="Foldase protein PrsA">
    <location>
        <begin position="21"/>
        <end position="303"/>
    </location>
</feature>
<feature type="domain" description="PpiC" evidence="1">
    <location>
        <begin position="137"/>
        <end position="233"/>
    </location>
</feature>
<feature type="lipid moiety-binding region" description="N-palmitoyl cysteine" evidence="1">
    <location>
        <position position="21"/>
    </location>
</feature>
<feature type="lipid moiety-binding region" description="S-diacylglycerol cysteine" evidence="1">
    <location>
        <position position="21"/>
    </location>
</feature>